<evidence type="ECO:0000255" key="1">
    <source>
        <dbReference type="HAMAP-Rule" id="MF_00090"/>
    </source>
</evidence>
<evidence type="ECO:0000305" key="2"/>
<feature type="chain" id="PRO_0000351910" description="Protein-L-isoaspartate O-methyltransferase">
    <location>
        <begin position="1"/>
        <end position="212"/>
    </location>
</feature>
<feature type="active site" evidence="1">
    <location>
        <position position="60"/>
    </location>
</feature>
<sequence>MTSQRTRERLIQRLCEEGVSNTKVLDVIRRTPRHLFVDEALAHRAYEDTALPIGHNQTISQPFMVAHMSELLLEAGPLDKVLEIGTGSGYQTAILAQLVERVFSVERIKVLQDRAKERLVELNLRNVVFRWGDGCEGWPALAPYNGIIVTAVAPEVPQALLDQLAPGGRMVIPVGPAGEAQQLMLIVREEHGFSRRVLGAVRFVPLLNGPLA</sequence>
<proteinExistence type="inferred from homology"/>
<name>PIMT_PSEP1</name>
<accession>A5W820</accession>
<reference key="1">
    <citation type="submission" date="2007-05" db="EMBL/GenBank/DDBJ databases">
        <title>Complete sequence of Pseudomonas putida F1.</title>
        <authorList>
            <consortium name="US DOE Joint Genome Institute"/>
            <person name="Copeland A."/>
            <person name="Lucas S."/>
            <person name="Lapidus A."/>
            <person name="Barry K."/>
            <person name="Detter J.C."/>
            <person name="Glavina del Rio T."/>
            <person name="Hammon N."/>
            <person name="Israni S."/>
            <person name="Dalin E."/>
            <person name="Tice H."/>
            <person name="Pitluck S."/>
            <person name="Chain P."/>
            <person name="Malfatti S."/>
            <person name="Shin M."/>
            <person name="Vergez L."/>
            <person name="Schmutz J."/>
            <person name="Larimer F."/>
            <person name="Land M."/>
            <person name="Hauser L."/>
            <person name="Kyrpides N."/>
            <person name="Lykidis A."/>
            <person name="Parales R."/>
            <person name="Richardson P."/>
        </authorList>
    </citation>
    <scope>NUCLEOTIDE SEQUENCE [LARGE SCALE GENOMIC DNA]</scope>
    <source>
        <strain>ATCC 700007 / DSM 6899 / JCM 31910 / BCRC 17059 / LMG 24140 / F1</strain>
    </source>
</reference>
<protein>
    <recommendedName>
        <fullName evidence="1">Protein-L-isoaspartate O-methyltransferase</fullName>
        <ecNumber evidence="1">2.1.1.77</ecNumber>
    </recommendedName>
    <alternativeName>
        <fullName evidence="1">L-isoaspartyl protein carboxyl methyltransferase</fullName>
    </alternativeName>
    <alternativeName>
        <fullName evidence="1">Protein L-isoaspartyl methyltransferase</fullName>
    </alternativeName>
    <alternativeName>
        <fullName evidence="1">Protein-beta-aspartate methyltransferase</fullName>
        <shortName evidence="1">PIMT</shortName>
    </alternativeName>
</protein>
<gene>
    <name evidence="1" type="primary">pcm</name>
    <name type="ordered locus">Pput_4156</name>
</gene>
<organism>
    <name type="scientific">Pseudomonas putida (strain ATCC 700007 / DSM 6899 / JCM 31910 / BCRC 17059 / LMG 24140 / F1)</name>
    <dbReference type="NCBI Taxonomy" id="351746"/>
    <lineage>
        <taxon>Bacteria</taxon>
        <taxon>Pseudomonadati</taxon>
        <taxon>Pseudomonadota</taxon>
        <taxon>Gammaproteobacteria</taxon>
        <taxon>Pseudomonadales</taxon>
        <taxon>Pseudomonadaceae</taxon>
        <taxon>Pseudomonas</taxon>
    </lineage>
</organism>
<comment type="function">
    <text evidence="1">Catalyzes the methyl esterification of L-isoaspartyl residues in peptides and proteins that result from spontaneous decomposition of normal L-aspartyl and L-asparaginyl residues. It plays a role in the repair and/or degradation of damaged proteins.</text>
</comment>
<comment type="catalytic activity">
    <reaction evidence="1">
        <text>[protein]-L-isoaspartate + S-adenosyl-L-methionine = [protein]-L-isoaspartate alpha-methyl ester + S-adenosyl-L-homocysteine</text>
        <dbReference type="Rhea" id="RHEA:12705"/>
        <dbReference type="Rhea" id="RHEA-COMP:12143"/>
        <dbReference type="Rhea" id="RHEA-COMP:12144"/>
        <dbReference type="ChEBI" id="CHEBI:57856"/>
        <dbReference type="ChEBI" id="CHEBI:59789"/>
        <dbReference type="ChEBI" id="CHEBI:90596"/>
        <dbReference type="ChEBI" id="CHEBI:90598"/>
        <dbReference type="EC" id="2.1.1.77"/>
    </reaction>
</comment>
<comment type="subcellular location">
    <subcellularLocation>
        <location evidence="1">Cytoplasm</location>
    </subcellularLocation>
</comment>
<comment type="similarity">
    <text evidence="1">Belongs to the methyltransferase superfamily. L-isoaspartyl/D-aspartyl protein methyltransferase family.</text>
</comment>
<comment type="sequence caution" evidence="2">
    <conflict type="erroneous initiation">
        <sequence resource="EMBL-CDS" id="ABQ80280"/>
    </conflict>
</comment>
<dbReference type="EC" id="2.1.1.77" evidence="1"/>
<dbReference type="EMBL" id="CP000712">
    <property type="protein sequence ID" value="ABQ80280.1"/>
    <property type="status" value="ALT_INIT"/>
    <property type="molecule type" value="Genomic_DNA"/>
</dbReference>
<dbReference type="SMR" id="A5W820"/>
<dbReference type="KEGG" id="ppf:Pput_4156"/>
<dbReference type="eggNOG" id="COG2518">
    <property type="taxonomic scope" value="Bacteria"/>
</dbReference>
<dbReference type="HOGENOM" id="CLU_055432_2_0_6"/>
<dbReference type="GO" id="GO:0005737">
    <property type="term" value="C:cytoplasm"/>
    <property type="evidence" value="ECO:0007669"/>
    <property type="project" value="UniProtKB-SubCell"/>
</dbReference>
<dbReference type="GO" id="GO:0004719">
    <property type="term" value="F:protein-L-isoaspartate (D-aspartate) O-methyltransferase activity"/>
    <property type="evidence" value="ECO:0007669"/>
    <property type="project" value="UniProtKB-UniRule"/>
</dbReference>
<dbReference type="GO" id="GO:0032259">
    <property type="term" value="P:methylation"/>
    <property type="evidence" value="ECO:0007669"/>
    <property type="project" value="UniProtKB-KW"/>
</dbReference>
<dbReference type="GO" id="GO:0036211">
    <property type="term" value="P:protein modification process"/>
    <property type="evidence" value="ECO:0007669"/>
    <property type="project" value="UniProtKB-UniRule"/>
</dbReference>
<dbReference type="GO" id="GO:0030091">
    <property type="term" value="P:protein repair"/>
    <property type="evidence" value="ECO:0007669"/>
    <property type="project" value="UniProtKB-UniRule"/>
</dbReference>
<dbReference type="CDD" id="cd02440">
    <property type="entry name" value="AdoMet_MTases"/>
    <property type="match status" value="1"/>
</dbReference>
<dbReference type="FunFam" id="3.40.50.150:FF:000010">
    <property type="entry name" value="Protein-L-isoaspartate O-methyltransferase"/>
    <property type="match status" value="1"/>
</dbReference>
<dbReference type="Gene3D" id="3.40.50.150">
    <property type="entry name" value="Vaccinia Virus protein VP39"/>
    <property type="match status" value="1"/>
</dbReference>
<dbReference type="HAMAP" id="MF_00090">
    <property type="entry name" value="PIMT"/>
    <property type="match status" value="1"/>
</dbReference>
<dbReference type="InterPro" id="IPR000682">
    <property type="entry name" value="PCMT"/>
</dbReference>
<dbReference type="InterPro" id="IPR029063">
    <property type="entry name" value="SAM-dependent_MTases_sf"/>
</dbReference>
<dbReference type="NCBIfam" id="TIGR00080">
    <property type="entry name" value="pimt"/>
    <property type="match status" value="1"/>
</dbReference>
<dbReference type="NCBIfam" id="NF001453">
    <property type="entry name" value="PRK00312.1"/>
    <property type="match status" value="1"/>
</dbReference>
<dbReference type="PANTHER" id="PTHR11579">
    <property type="entry name" value="PROTEIN-L-ISOASPARTATE O-METHYLTRANSFERASE"/>
    <property type="match status" value="1"/>
</dbReference>
<dbReference type="PANTHER" id="PTHR11579:SF0">
    <property type="entry name" value="PROTEIN-L-ISOASPARTATE(D-ASPARTATE) O-METHYLTRANSFERASE"/>
    <property type="match status" value="1"/>
</dbReference>
<dbReference type="Pfam" id="PF01135">
    <property type="entry name" value="PCMT"/>
    <property type="match status" value="1"/>
</dbReference>
<dbReference type="SUPFAM" id="SSF53335">
    <property type="entry name" value="S-adenosyl-L-methionine-dependent methyltransferases"/>
    <property type="match status" value="1"/>
</dbReference>
<dbReference type="PROSITE" id="PS01279">
    <property type="entry name" value="PCMT"/>
    <property type="match status" value="1"/>
</dbReference>
<keyword id="KW-0963">Cytoplasm</keyword>
<keyword id="KW-0489">Methyltransferase</keyword>
<keyword id="KW-0949">S-adenosyl-L-methionine</keyword>
<keyword id="KW-0808">Transferase</keyword>